<proteinExistence type="inferred from homology"/>
<evidence type="ECO:0000255" key="1">
    <source>
        <dbReference type="HAMAP-Rule" id="MF_00531"/>
    </source>
</evidence>
<evidence type="ECO:0000305" key="2"/>
<protein>
    <recommendedName>
        <fullName evidence="1">Small ribosomal subunit protein uS19</fullName>
    </recommendedName>
    <alternativeName>
        <fullName evidence="2">30S ribosomal protein S19</fullName>
    </alternativeName>
</protein>
<keyword id="KW-1185">Reference proteome</keyword>
<keyword id="KW-0687">Ribonucleoprotein</keyword>
<keyword id="KW-0689">Ribosomal protein</keyword>
<keyword id="KW-0694">RNA-binding</keyword>
<keyword id="KW-0699">rRNA-binding</keyword>
<comment type="function">
    <text evidence="1">Protein S19 forms a complex with S13 that binds strongly to the 16S ribosomal RNA.</text>
</comment>
<comment type="similarity">
    <text evidence="1">Belongs to the universal ribosomal protein uS19 family.</text>
</comment>
<accession>A1T0D8</accession>
<feature type="chain" id="PRO_1000051108" description="Small ribosomal subunit protein uS19">
    <location>
        <begin position="1"/>
        <end position="92"/>
    </location>
</feature>
<reference key="1">
    <citation type="journal article" date="2008" name="BMC Genomics">
        <title>Genomics of an extreme psychrophile, Psychromonas ingrahamii.</title>
        <authorList>
            <person name="Riley M."/>
            <person name="Staley J.T."/>
            <person name="Danchin A."/>
            <person name="Wang T.Z."/>
            <person name="Brettin T.S."/>
            <person name="Hauser L.J."/>
            <person name="Land M.L."/>
            <person name="Thompson L.S."/>
        </authorList>
    </citation>
    <scope>NUCLEOTIDE SEQUENCE [LARGE SCALE GENOMIC DNA]</scope>
    <source>
        <strain>DSM 17664 / CCUG 51855 / 37</strain>
    </source>
</reference>
<sequence length="92" mass="10512">MPRSLKKGPFIDLHLLKKVEKAMESGEKKPIKTWSRRSMIIPDMIGLTIAVHNGRQHVPVFVTDEMVGQKLGEFAPTRTYRGHTSDKKTKKK</sequence>
<name>RS19_PSYIN</name>
<gene>
    <name evidence="1" type="primary">rpsS</name>
    <name type="ordered locus">Ping_3520</name>
</gene>
<dbReference type="EMBL" id="CP000510">
    <property type="protein sequence ID" value="ABM05203.1"/>
    <property type="molecule type" value="Genomic_DNA"/>
</dbReference>
<dbReference type="RefSeq" id="WP_011771751.1">
    <property type="nucleotide sequence ID" value="NC_008709.1"/>
</dbReference>
<dbReference type="SMR" id="A1T0D8"/>
<dbReference type="STRING" id="357804.Ping_3520"/>
<dbReference type="KEGG" id="pin:Ping_3520"/>
<dbReference type="eggNOG" id="COG0185">
    <property type="taxonomic scope" value="Bacteria"/>
</dbReference>
<dbReference type="HOGENOM" id="CLU_144911_0_1_6"/>
<dbReference type="OrthoDB" id="9797833at2"/>
<dbReference type="Proteomes" id="UP000000639">
    <property type="component" value="Chromosome"/>
</dbReference>
<dbReference type="GO" id="GO:0005737">
    <property type="term" value="C:cytoplasm"/>
    <property type="evidence" value="ECO:0007669"/>
    <property type="project" value="UniProtKB-ARBA"/>
</dbReference>
<dbReference type="GO" id="GO:0015935">
    <property type="term" value="C:small ribosomal subunit"/>
    <property type="evidence" value="ECO:0007669"/>
    <property type="project" value="InterPro"/>
</dbReference>
<dbReference type="GO" id="GO:0019843">
    <property type="term" value="F:rRNA binding"/>
    <property type="evidence" value="ECO:0007669"/>
    <property type="project" value="UniProtKB-UniRule"/>
</dbReference>
<dbReference type="GO" id="GO:0003735">
    <property type="term" value="F:structural constituent of ribosome"/>
    <property type="evidence" value="ECO:0007669"/>
    <property type="project" value="InterPro"/>
</dbReference>
<dbReference type="GO" id="GO:0000028">
    <property type="term" value="P:ribosomal small subunit assembly"/>
    <property type="evidence" value="ECO:0007669"/>
    <property type="project" value="TreeGrafter"/>
</dbReference>
<dbReference type="GO" id="GO:0006412">
    <property type="term" value="P:translation"/>
    <property type="evidence" value="ECO:0007669"/>
    <property type="project" value="UniProtKB-UniRule"/>
</dbReference>
<dbReference type="FunFam" id="3.30.860.10:FF:000001">
    <property type="entry name" value="30S ribosomal protein S19"/>
    <property type="match status" value="1"/>
</dbReference>
<dbReference type="Gene3D" id="3.30.860.10">
    <property type="entry name" value="30s Ribosomal Protein S19, Chain A"/>
    <property type="match status" value="1"/>
</dbReference>
<dbReference type="HAMAP" id="MF_00531">
    <property type="entry name" value="Ribosomal_uS19"/>
    <property type="match status" value="1"/>
</dbReference>
<dbReference type="InterPro" id="IPR002222">
    <property type="entry name" value="Ribosomal_uS19"/>
</dbReference>
<dbReference type="InterPro" id="IPR005732">
    <property type="entry name" value="Ribosomal_uS19_bac-type"/>
</dbReference>
<dbReference type="InterPro" id="IPR020934">
    <property type="entry name" value="Ribosomal_uS19_CS"/>
</dbReference>
<dbReference type="InterPro" id="IPR023575">
    <property type="entry name" value="Ribosomal_uS19_SF"/>
</dbReference>
<dbReference type="NCBIfam" id="TIGR01050">
    <property type="entry name" value="rpsS_bact"/>
    <property type="match status" value="1"/>
</dbReference>
<dbReference type="PANTHER" id="PTHR11880">
    <property type="entry name" value="RIBOSOMAL PROTEIN S19P FAMILY MEMBER"/>
    <property type="match status" value="1"/>
</dbReference>
<dbReference type="PANTHER" id="PTHR11880:SF8">
    <property type="entry name" value="SMALL RIBOSOMAL SUBUNIT PROTEIN US19M"/>
    <property type="match status" value="1"/>
</dbReference>
<dbReference type="Pfam" id="PF00203">
    <property type="entry name" value="Ribosomal_S19"/>
    <property type="match status" value="1"/>
</dbReference>
<dbReference type="PIRSF" id="PIRSF002144">
    <property type="entry name" value="Ribosomal_S19"/>
    <property type="match status" value="1"/>
</dbReference>
<dbReference type="PRINTS" id="PR00975">
    <property type="entry name" value="RIBOSOMALS19"/>
</dbReference>
<dbReference type="SUPFAM" id="SSF54570">
    <property type="entry name" value="Ribosomal protein S19"/>
    <property type="match status" value="1"/>
</dbReference>
<dbReference type="PROSITE" id="PS00323">
    <property type="entry name" value="RIBOSOMAL_S19"/>
    <property type="match status" value="1"/>
</dbReference>
<organism>
    <name type="scientific">Psychromonas ingrahamii (strain DSM 17664 / CCUG 51855 / 37)</name>
    <dbReference type="NCBI Taxonomy" id="357804"/>
    <lineage>
        <taxon>Bacteria</taxon>
        <taxon>Pseudomonadati</taxon>
        <taxon>Pseudomonadota</taxon>
        <taxon>Gammaproteobacteria</taxon>
        <taxon>Alteromonadales</taxon>
        <taxon>Psychromonadaceae</taxon>
        <taxon>Psychromonas</taxon>
    </lineage>
</organism>